<comment type="function">
    <text evidence="2">Sulfur dioxygenase that plays an essential role in hydrogen sulfide catabolism in the mitochondrial matrix. Hydrogen sulfide (H(2)S) is first oxidized by SQRDL, giving rise to cysteine persulfide residues. ETHE1 consumes molecular oxygen to catalyze the oxidation of the persulfide, once it has been transferred to a thiophilic acceptor, such as glutathione (R-SSH). Plays an important role in metabolic homeostasis in mitochondria by metabolizing hydrogen sulfide and preventing the accumulation of supraphysiological H(2)S levels that have toxic effects, due to the inhibition of cytochrome c oxidase. First described as a protein that can shuttle between the nucleus and the cytoplasm and suppress p53-induced apoptosis by sequestering the transcription factor RELA/NFKB3 in the cytoplasm and preventing its accumulation in the nucleus.</text>
</comment>
<comment type="catalytic activity">
    <reaction evidence="2">
        <text>S-sulfanylglutathione + O2 + H2O = sulfite + glutathione + 2 H(+)</text>
        <dbReference type="Rhea" id="RHEA:12981"/>
        <dbReference type="ChEBI" id="CHEBI:15377"/>
        <dbReference type="ChEBI" id="CHEBI:15378"/>
        <dbReference type="ChEBI" id="CHEBI:15379"/>
        <dbReference type="ChEBI" id="CHEBI:17359"/>
        <dbReference type="ChEBI" id="CHEBI:57925"/>
        <dbReference type="ChEBI" id="CHEBI:58905"/>
        <dbReference type="EC" id="1.13.11.18"/>
    </reaction>
</comment>
<comment type="cofactor">
    <cofactor evidence="2">
        <name>Fe(2+)</name>
        <dbReference type="ChEBI" id="CHEBI:29033"/>
    </cofactor>
    <text evidence="2">Binds 1 Fe(2+) ion per subunit.</text>
</comment>
<comment type="activity regulation">
    <text evidence="1">Glutathione increases enzyme activity.</text>
</comment>
<comment type="subunit">
    <text evidence="2">Homodimer. Monomer. Interacts with TST. May interact with RELA.</text>
</comment>
<comment type="subcellular location">
    <subcellularLocation>
        <location evidence="2">Cytoplasm</location>
    </subcellularLocation>
    <subcellularLocation>
        <location evidence="2">Nucleus</location>
    </subcellularLocation>
    <subcellularLocation>
        <location evidence="2">Mitochondrion matrix</location>
    </subcellularLocation>
</comment>
<comment type="similarity">
    <text evidence="4">Belongs to the metallo-beta-lactamase superfamily. Glyoxalase II family.</text>
</comment>
<protein>
    <recommendedName>
        <fullName>Persulfide dioxygenase ETHE1, mitochondrial</fullName>
        <ecNumber evidence="2">1.13.11.18</ecNumber>
    </recommendedName>
    <alternativeName>
        <fullName>Sulfur dioxygenase ETHE1</fullName>
    </alternativeName>
</protein>
<feature type="transit peptide" description="Mitochondrion" evidence="2">
    <location>
        <begin position="1"/>
        <end position="7"/>
    </location>
</feature>
<feature type="chain" id="PRO_0000278566" description="Persulfide dioxygenase ETHE1, mitochondrial">
    <location>
        <begin position="8"/>
        <end position="254"/>
    </location>
</feature>
<feature type="binding site" evidence="2">
    <location>
        <position position="79"/>
    </location>
    <ligand>
        <name>Fe cation</name>
        <dbReference type="ChEBI" id="CHEBI:24875"/>
        <note>catalytic</note>
    </ligand>
</feature>
<feature type="binding site" evidence="2">
    <location>
        <position position="135"/>
    </location>
    <ligand>
        <name>Fe cation</name>
        <dbReference type="ChEBI" id="CHEBI:24875"/>
        <note>catalytic</note>
    </ligand>
</feature>
<feature type="binding site" evidence="2">
    <location>
        <position position="154"/>
    </location>
    <ligand>
        <name>Fe cation</name>
        <dbReference type="ChEBI" id="CHEBI:24875"/>
        <note>catalytic</note>
    </ligand>
</feature>
<feature type="modified residue" description="Phosphoserine" evidence="3">
    <location>
        <position position="14"/>
    </location>
</feature>
<feature type="modified residue" description="Phosphoserine" evidence="2">
    <location>
        <position position="19"/>
    </location>
</feature>
<feature type="modified residue" description="N6-acetyllysine; alternate" evidence="3">
    <location>
        <position position="32"/>
    </location>
</feature>
<feature type="modified residue" description="N6-succinyllysine; alternate" evidence="3">
    <location>
        <position position="32"/>
    </location>
</feature>
<feature type="modified residue" description="N6-acetyllysine" evidence="2">
    <location>
        <position position="66"/>
    </location>
</feature>
<reference key="1">
    <citation type="submission" date="2005-08" db="EMBL/GenBank/DDBJ databases">
        <authorList>
            <consortium name="NIH - Mammalian Gene Collection (MGC) project"/>
        </authorList>
    </citation>
    <scope>NUCLEOTIDE SEQUENCE [LARGE SCALE MRNA]</scope>
    <source>
        <strain>Crossbred X Angus</strain>
        <tissue>Ileum</tissue>
    </source>
</reference>
<name>ETHE1_BOVIN</name>
<organism>
    <name type="scientific">Bos taurus</name>
    <name type="common">Bovine</name>
    <dbReference type="NCBI Taxonomy" id="9913"/>
    <lineage>
        <taxon>Eukaryota</taxon>
        <taxon>Metazoa</taxon>
        <taxon>Chordata</taxon>
        <taxon>Craniata</taxon>
        <taxon>Vertebrata</taxon>
        <taxon>Euteleostomi</taxon>
        <taxon>Mammalia</taxon>
        <taxon>Eutheria</taxon>
        <taxon>Laurasiatheria</taxon>
        <taxon>Artiodactyla</taxon>
        <taxon>Ruminantia</taxon>
        <taxon>Pecora</taxon>
        <taxon>Bovidae</taxon>
        <taxon>Bovinae</taxon>
        <taxon>Bos</taxon>
    </lineage>
</organism>
<gene>
    <name type="primary">ETHE1</name>
</gene>
<evidence type="ECO:0000250" key="1"/>
<evidence type="ECO:0000250" key="2">
    <source>
        <dbReference type="UniProtKB" id="O95571"/>
    </source>
</evidence>
<evidence type="ECO:0000250" key="3">
    <source>
        <dbReference type="UniProtKB" id="Q9DCM0"/>
    </source>
</evidence>
<evidence type="ECO:0000305" key="4"/>
<sequence length="254" mass="27900">MAGSVLKIAGRRLSQHTGSGAPVLLRQMFEPKSCTYTYLLGDRESREAVLIDPVLETAQRDAQLVKELGLRLLYAVNTHCHADHITGSGLLRSLLPGCQSVISRLSGAQADWHIEDGDSIQFGRFALETRASPGHTPGCVTFVLNDHSMAFTGDALLIRGCGRTDFQQGCAETLYHSVHEKIFTLPGNCLIYPAHDYHGLTVSTVEEERTLNPRLTLSCEEFVKVMDKLNLPKPQQIDFAVPANMRCGIQTPPS</sequence>
<accession>Q3T094</accession>
<proteinExistence type="evidence at transcript level"/>
<keyword id="KW-0007">Acetylation</keyword>
<keyword id="KW-0963">Cytoplasm</keyword>
<keyword id="KW-0223">Dioxygenase</keyword>
<keyword id="KW-0408">Iron</keyword>
<keyword id="KW-0479">Metal-binding</keyword>
<keyword id="KW-0496">Mitochondrion</keyword>
<keyword id="KW-0539">Nucleus</keyword>
<keyword id="KW-0560">Oxidoreductase</keyword>
<keyword id="KW-0597">Phosphoprotein</keyword>
<keyword id="KW-1185">Reference proteome</keyword>
<keyword id="KW-0809">Transit peptide</keyword>
<dbReference type="EC" id="1.13.11.18" evidence="2"/>
<dbReference type="EMBL" id="BC102496">
    <property type="protein sequence ID" value="AAI02497.1"/>
    <property type="molecule type" value="mRNA"/>
</dbReference>
<dbReference type="RefSeq" id="NP_001029516.1">
    <property type="nucleotide sequence ID" value="NM_001034344.1"/>
</dbReference>
<dbReference type="SMR" id="Q3T094"/>
<dbReference type="FunCoup" id="Q3T094">
    <property type="interactions" value="1378"/>
</dbReference>
<dbReference type="STRING" id="9913.ENSBTAP00000005747"/>
<dbReference type="PaxDb" id="9913-ENSBTAP00000005747"/>
<dbReference type="PeptideAtlas" id="Q3T094"/>
<dbReference type="Ensembl" id="ENSBTAT00000005747.6">
    <property type="protein sequence ID" value="ENSBTAP00000005747.4"/>
    <property type="gene ID" value="ENSBTAG00000004379.6"/>
</dbReference>
<dbReference type="GeneID" id="509150"/>
<dbReference type="KEGG" id="bta:509150"/>
<dbReference type="CTD" id="23474"/>
<dbReference type="VEuPathDB" id="HostDB:ENSBTAG00000004379"/>
<dbReference type="VGNC" id="VGNC:28623">
    <property type="gene designation" value="ETHE1"/>
</dbReference>
<dbReference type="eggNOG" id="KOG0814">
    <property type="taxonomic scope" value="Eukaryota"/>
</dbReference>
<dbReference type="GeneTree" id="ENSGT00940000159046"/>
<dbReference type="HOGENOM" id="CLU_030571_7_0_1"/>
<dbReference type="InParanoid" id="Q3T094"/>
<dbReference type="OMA" id="VMDIDYA"/>
<dbReference type="OrthoDB" id="449487at2759"/>
<dbReference type="TreeFam" id="TF312952"/>
<dbReference type="Reactome" id="R-BTA-1614517">
    <property type="pathway name" value="Sulfide oxidation to sulfate"/>
</dbReference>
<dbReference type="Proteomes" id="UP000009136">
    <property type="component" value="Chromosome 18"/>
</dbReference>
<dbReference type="Bgee" id="ENSBTAG00000004379">
    <property type="expression patterns" value="Expressed in digestive system secreted substance and 104 other cell types or tissues"/>
</dbReference>
<dbReference type="GO" id="GO:0005759">
    <property type="term" value="C:mitochondrial matrix"/>
    <property type="evidence" value="ECO:0007669"/>
    <property type="project" value="UniProtKB-SubCell"/>
</dbReference>
<dbReference type="GO" id="GO:0005739">
    <property type="term" value="C:mitochondrion"/>
    <property type="evidence" value="ECO:0000318"/>
    <property type="project" value="GO_Central"/>
</dbReference>
<dbReference type="GO" id="GO:0005634">
    <property type="term" value="C:nucleus"/>
    <property type="evidence" value="ECO:0007669"/>
    <property type="project" value="UniProtKB-SubCell"/>
</dbReference>
<dbReference type="GO" id="GO:0005506">
    <property type="term" value="F:iron ion binding"/>
    <property type="evidence" value="ECO:0000250"/>
    <property type="project" value="UniProtKB"/>
</dbReference>
<dbReference type="GO" id="GO:0050313">
    <property type="term" value="F:sulfur dioxygenase activity"/>
    <property type="evidence" value="ECO:0000250"/>
    <property type="project" value="UniProtKB"/>
</dbReference>
<dbReference type="GO" id="GO:0006749">
    <property type="term" value="P:glutathione metabolic process"/>
    <property type="evidence" value="ECO:0000250"/>
    <property type="project" value="UniProtKB"/>
</dbReference>
<dbReference type="GO" id="GO:0070813">
    <property type="term" value="P:hydrogen sulfide metabolic process"/>
    <property type="evidence" value="ECO:0000250"/>
    <property type="project" value="UniProtKB"/>
</dbReference>
<dbReference type="CDD" id="cd07724">
    <property type="entry name" value="POD-like_MBL-fold"/>
    <property type="match status" value="1"/>
</dbReference>
<dbReference type="FunFam" id="3.60.15.10:FF:000013">
    <property type="entry name" value="Persulfide dioxygenase ETHE1, mitochondrial"/>
    <property type="match status" value="1"/>
</dbReference>
<dbReference type="Gene3D" id="3.60.15.10">
    <property type="entry name" value="Ribonuclease Z/Hydroxyacylglutathione hydrolase-like"/>
    <property type="match status" value="1"/>
</dbReference>
<dbReference type="InterPro" id="IPR001279">
    <property type="entry name" value="Metallo-B-lactamas"/>
</dbReference>
<dbReference type="InterPro" id="IPR051682">
    <property type="entry name" value="Mito_Persulfide_Diox"/>
</dbReference>
<dbReference type="InterPro" id="IPR044528">
    <property type="entry name" value="POD-like_MBL-fold"/>
</dbReference>
<dbReference type="InterPro" id="IPR036866">
    <property type="entry name" value="RibonucZ/Hydroxyglut_hydro"/>
</dbReference>
<dbReference type="PANTHER" id="PTHR43084">
    <property type="entry name" value="PERSULFIDE DIOXYGENASE ETHE1"/>
    <property type="match status" value="1"/>
</dbReference>
<dbReference type="PANTHER" id="PTHR43084:SF1">
    <property type="entry name" value="PERSULFIDE DIOXYGENASE ETHE1, MITOCHONDRIAL"/>
    <property type="match status" value="1"/>
</dbReference>
<dbReference type="Pfam" id="PF00753">
    <property type="entry name" value="Lactamase_B"/>
    <property type="match status" value="1"/>
</dbReference>
<dbReference type="SMART" id="SM00849">
    <property type="entry name" value="Lactamase_B"/>
    <property type="match status" value="1"/>
</dbReference>
<dbReference type="SUPFAM" id="SSF56281">
    <property type="entry name" value="Metallo-hydrolase/oxidoreductase"/>
    <property type="match status" value="1"/>
</dbReference>